<sequence length="527" mass="59273">MIAMIATAIIGIVAGGGLGWALHKFFRARTLRLAREEAQDILDEANEVVELRNLEERERIQEIEMELWTKVEPEMLKSEGRIEDLQEVANERKAKADAIVQEEKKKLQDREADVKVQEQALRGQEAELGKLKEAQKALNQELVQKLTERLGTSAEEFKTQLKNQMEEESRRRAARMIQETEADTKEHAESEAKRILSLVIDRFARPYCAERGIGAVNFPDAHIRKLFCDPAGNNIKAVQDACGCDIIVEEGMEMVGVAGFDPVRRELTRRTLERIFKEKKNINPDFIRKIAENQKKELFKNIKHDGDSLAKELKLEGLNAEIRQMMGSLRYRYSFTQNQYFHCGEVGWLAGLMAAELGIDIKKARRVGMLHDIGKSMDHTVEGGHAVIGADFIAARGEAPDVVHAVKAHHFDEQPSTDHAFLVIAADAVSGARPGARRSTIESYNQKVSELQDIARSFPGVTDCFVLSGGRECRVMVNGKKVDDTQAMDLSRKIAARIEEECNYPGSIKVVVVRETVVTEQTRKELA</sequence>
<dbReference type="EC" id="3.1.-.-" evidence="1"/>
<dbReference type="EMBL" id="BX842651">
    <property type="protein sequence ID" value="CAE80003.1"/>
    <property type="molecule type" value="Genomic_DNA"/>
</dbReference>
<dbReference type="RefSeq" id="WP_011164605.1">
    <property type="nucleotide sequence ID" value="NC_005363.1"/>
</dbReference>
<dbReference type="SMR" id="Q6ML54"/>
<dbReference type="STRING" id="264462.Bd2166"/>
<dbReference type="GeneID" id="93013106"/>
<dbReference type="KEGG" id="bba:Bd2166"/>
<dbReference type="eggNOG" id="COG1418">
    <property type="taxonomic scope" value="Bacteria"/>
</dbReference>
<dbReference type="HOGENOM" id="CLU_028328_1_0_7"/>
<dbReference type="Proteomes" id="UP000008080">
    <property type="component" value="Chromosome"/>
</dbReference>
<dbReference type="GO" id="GO:0005886">
    <property type="term" value="C:plasma membrane"/>
    <property type="evidence" value="ECO:0007669"/>
    <property type="project" value="UniProtKB-SubCell"/>
</dbReference>
<dbReference type="GO" id="GO:0003723">
    <property type="term" value="F:RNA binding"/>
    <property type="evidence" value="ECO:0007669"/>
    <property type="project" value="UniProtKB-UniRule"/>
</dbReference>
<dbReference type="GO" id="GO:0004521">
    <property type="term" value="F:RNA endonuclease activity"/>
    <property type="evidence" value="ECO:0007669"/>
    <property type="project" value="UniProtKB-UniRule"/>
</dbReference>
<dbReference type="GO" id="GO:0006402">
    <property type="term" value="P:mRNA catabolic process"/>
    <property type="evidence" value="ECO:0007669"/>
    <property type="project" value="UniProtKB-UniRule"/>
</dbReference>
<dbReference type="CDD" id="cd00077">
    <property type="entry name" value="HDc"/>
    <property type="match status" value="1"/>
</dbReference>
<dbReference type="CDD" id="cd22431">
    <property type="entry name" value="KH-I_RNaseY"/>
    <property type="match status" value="1"/>
</dbReference>
<dbReference type="Gene3D" id="1.10.3210.10">
    <property type="entry name" value="Hypothetical protein af1432"/>
    <property type="match status" value="1"/>
</dbReference>
<dbReference type="HAMAP" id="MF_00335">
    <property type="entry name" value="RNase_Y"/>
    <property type="match status" value="1"/>
</dbReference>
<dbReference type="InterPro" id="IPR003607">
    <property type="entry name" value="HD/PDEase_dom"/>
</dbReference>
<dbReference type="InterPro" id="IPR006674">
    <property type="entry name" value="HD_domain"/>
</dbReference>
<dbReference type="InterPro" id="IPR006675">
    <property type="entry name" value="HDIG_dom"/>
</dbReference>
<dbReference type="InterPro" id="IPR017705">
    <property type="entry name" value="Ribonuclease_Y"/>
</dbReference>
<dbReference type="InterPro" id="IPR022711">
    <property type="entry name" value="RNase_Y_N"/>
</dbReference>
<dbReference type="NCBIfam" id="TIGR00277">
    <property type="entry name" value="HDIG"/>
    <property type="match status" value="1"/>
</dbReference>
<dbReference type="Pfam" id="PF01966">
    <property type="entry name" value="HD"/>
    <property type="match status" value="1"/>
</dbReference>
<dbReference type="Pfam" id="PF12072">
    <property type="entry name" value="RNase_Y_N"/>
    <property type="match status" value="1"/>
</dbReference>
<dbReference type="SUPFAM" id="SSF109604">
    <property type="entry name" value="HD-domain/PDEase-like"/>
    <property type="match status" value="1"/>
</dbReference>
<dbReference type="PROSITE" id="PS51831">
    <property type="entry name" value="HD"/>
    <property type="match status" value="1"/>
</dbReference>
<evidence type="ECO:0000255" key="1">
    <source>
        <dbReference type="HAMAP-Rule" id="MF_00335"/>
    </source>
</evidence>
<evidence type="ECO:0000255" key="2">
    <source>
        <dbReference type="PROSITE-ProRule" id="PRU01175"/>
    </source>
</evidence>
<proteinExistence type="inferred from homology"/>
<reference key="1">
    <citation type="journal article" date="2004" name="Science">
        <title>A predator unmasked: life cycle of Bdellovibrio bacteriovorus from a genomic perspective.</title>
        <authorList>
            <person name="Rendulic S."/>
            <person name="Jagtap P."/>
            <person name="Rosinus A."/>
            <person name="Eppinger M."/>
            <person name="Baar C."/>
            <person name="Lanz C."/>
            <person name="Keller H."/>
            <person name="Lambert C."/>
            <person name="Evans K.J."/>
            <person name="Goesmann A."/>
            <person name="Meyer F."/>
            <person name="Sockett R.E."/>
            <person name="Schuster S.C."/>
        </authorList>
    </citation>
    <scope>NUCLEOTIDE SEQUENCE [LARGE SCALE GENOMIC DNA]</scope>
    <source>
        <strain>ATCC 15356 / DSM 50701 / NCIMB 9529 / HD100</strain>
    </source>
</reference>
<feature type="chain" id="PRO_0000344828" description="Ribonuclease Y 2">
    <location>
        <begin position="1"/>
        <end position="527"/>
    </location>
</feature>
<feature type="transmembrane region" description="Helical" evidence="1">
    <location>
        <begin position="2"/>
        <end position="22"/>
    </location>
</feature>
<feature type="domain" description="HD" evidence="2">
    <location>
        <begin position="339"/>
        <end position="432"/>
    </location>
</feature>
<accession>Q6ML54</accession>
<comment type="function">
    <text evidence="1">Endoribonuclease that initiates mRNA decay.</text>
</comment>
<comment type="subcellular location">
    <subcellularLocation>
        <location evidence="1">Cell membrane</location>
        <topology evidence="1">Single-pass membrane protein</topology>
    </subcellularLocation>
</comment>
<comment type="similarity">
    <text evidence="1">Belongs to the RNase Y family.</text>
</comment>
<organism>
    <name type="scientific">Bdellovibrio bacteriovorus (strain ATCC 15356 / DSM 50701 / NCIMB 9529 / HD100)</name>
    <dbReference type="NCBI Taxonomy" id="264462"/>
    <lineage>
        <taxon>Bacteria</taxon>
        <taxon>Pseudomonadati</taxon>
        <taxon>Bdellovibrionota</taxon>
        <taxon>Bdellovibrionia</taxon>
        <taxon>Bdellovibrionales</taxon>
        <taxon>Pseudobdellovibrionaceae</taxon>
        <taxon>Bdellovibrio</taxon>
    </lineage>
</organism>
<keyword id="KW-1003">Cell membrane</keyword>
<keyword id="KW-0255">Endonuclease</keyword>
<keyword id="KW-0378">Hydrolase</keyword>
<keyword id="KW-0472">Membrane</keyword>
<keyword id="KW-0540">Nuclease</keyword>
<keyword id="KW-1185">Reference proteome</keyword>
<keyword id="KW-0694">RNA-binding</keyword>
<keyword id="KW-0812">Transmembrane</keyword>
<keyword id="KW-1133">Transmembrane helix</keyword>
<name>RNY2_BDEBA</name>
<protein>
    <recommendedName>
        <fullName evidence="1">Ribonuclease Y 2</fullName>
        <shortName evidence="1">RNase Y 2</shortName>
        <ecNumber evidence="1">3.1.-.-</ecNumber>
    </recommendedName>
</protein>
<gene>
    <name evidence="1" type="primary">rny2</name>
    <name type="ordered locus">Bd2166</name>
</gene>